<keyword id="KW-0025">Alternative splicing</keyword>
<keyword id="KW-0966">Cell projection</keyword>
<keyword id="KW-1186">Ciliopathy</keyword>
<keyword id="KW-0969">Cilium</keyword>
<keyword id="KW-0175">Coiled coil</keyword>
<keyword id="KW-0963">Cytoplasm</keyword>
<keyword id="KW-0206">Cytoskeleton</keyword>
<keyword id="KW-0225">Disease variant</keyword>
<keyword id="KW-0479">Metal-binding</keyword>
<keyword id="KW-0597">Phosphoprotein</keyword>
<keyword id="KW-1267">Proteomics identification</keyword>
<keyword id="KW-1185">Reference proteome</keyword>
<keyword id="KW-0862">Zinc</keyword>
<keyword id="KW-0863">Zinc-finger</keyword>
<dbReference type="EMBL" id="AK057406">
    <property type="protein sequence ID" value="BAB71474.1"/>
    <property type="molecule type" value="mRNA"/>
</dbReference>
<dbReference type="EMBL" id="AC023049">
    <property type="status" value="NOT_ANNOTATED_CDS"/>
    <property type="molecule type" value="Genomic_DNA"/>
</dbReference>
<dbReference type="EMBL" id="BC033308">
    <property type="protein sequence ID" value="AAH33308.1"/>
    <property type="molecule type" value="mRNA"/>
</dbReference>
<dbReference type="CCDS" id="CCDS3096.1">
    <molecule id="Q8IYY4-1"/>
</dbReference>
<dbReference type="CCDS" id="CCDS54645.1">
    <molecule id="Q8IYY4-2"/>
</dbReference>
<dbReference type="RefSeq" id="NP_001164009.1">
    <molecule id="Q8IYY4-2"/>
    <property type="nucleotide sequence ID" value="NM_001170538.1"/>
</dbReference>
<dbReference type="RefSeq" id="NP_775814.2">
    <molecule id="Q8IYY4-1"/>
    <property type="nucleotide sequence ID" value="NM_173543.3"/>
</dbReference>
<dbReference type="SMR" id="Q8IYY4"/>
<dbReference type="BioGRID" id="128259">
    <property type="interactions" value="19"/>
</dbReference>
<dbReference type="FunCoup" id="Q8IYY4">
    <property type="interactions" value="115"/>
</dbReference>
<dbReference type="IntAct" id="Q8IYY4">
    <property type="interactions" value="11"/>
</dbReference>
<dbReference type="STRING" id="9606.ENSP00000332148"/>
<dbReference type="GlyGen" id="Q8IYY4">
    <property type="glycosylation" value="3 sites"/>
</dbReference>
<dbReference type="iPTMnet" id="Q8IYY4"/>
<dbReference type="PhosphoSitePlus" id="Q8IYY4"/>
<dbReference type="BioMuta" id="DZIP1L"/>
<dbReference type="DMDM" id="296434487"/>
<dbReference type="jPOST" id="Q8IYY4"/>
<dbReference type="MassIVE" id="Q8IYY4"/>
<dbReference type="PaxDb" id="9606-ENSP00000332148"/>
<dbReference type="PeptideAtlas" id="Q8IYY4"/>
<dbReference type="ProteomicsDB" id="71261">
    <molecule id="Q8IYY4-1"/>
</dbReference>
<dbReference type="ProteomicsDB" id="71262">
    <molecule id="Q8IYY4-2"/>
</dbReference>
<dbReference type="Antibodypedia" id="33422">
    <property type="antibodies" value="14 antibodies from 9 providers"/>
</dbReference>
<dbReference type="DNASU" id="199221"/>
<dbReference type="Ensembl" id="ENST00000327532.7">
    <molecule id="Q8IYY4-1"/>
    <property type="protein sequence ID" value="ENSP00000332148.2"/>
    <property type="gene ID" value="ENSG00000158163.15"/>
</dbReference>
<dbReference type="Ensembl" id="ENST00000469243.5">
    <molecule id="Q8IYY4-2"/>
    <property type="protein sequence ID" value="ENSP00000419486.1"/>
    <property type="gene ID" value="ENSG00000158163.15"/>
</dbReference>
<dbReference type="GeneID" id="199221"/>
<dbReference type="KEGG" id="hsa:199221"/>
<dbReference type="MANE-Select" id="ENST00000327532.7">
    <property type="protein sequence ID" value="ENSP00000332148.2"/>
    <property type="RefSeq nucleotide sequence ID" value="NM_173543.3"/>
    <property type="RefSeq protein sequence ID" value="NP_775814.2"/>
</dbReference>
<dbReference type="UCSC" id="uc003erq.4">
    <molecule id="Q8IYY4-1"/>
    <property type="organism name" value="human"/>
</dbReference>
<dbReference type="AGR" id="HGNC:26551"/>
<dbReference type="CTD" id="199221"/>
<dbReference type="DisGeNET" id="199221"/>
<dbReference type="GeneCards" id="DZIP1L"/>
<dbReference type="HGNC" id="HGNC:26551">
    <property type="gene designation" value="DZIP1L"/>
</dbReference>
<dbReference type="HPA" id="ENSG00000158163">
    <property type="expression patterns" value="Low tissue specificity"/>
</dbReference>
<dbReference type="MalaCards" id="DZIP1L"/>
<dbReference type="MIM" id="617570">
    <property type="type" value="gene"/>
</dbReference>
<dbReference type="MIM" id="617610">
    <property type="type" value="phenotype"/>
</dbReference>
<dbReference type="neXtProt" id="NX_Q8IYY4"/>
<dbReference type="OpenTargets" id="ENSG00000158163"/>
<dbReference type="Orphanet" id="731">
    <property type="disease" value="Autosomal recessive polycystic kidney disease"/>
</dbReference>
<dbReference type="PharmGKB" id="PA134951988"/>
<dbReference type="VEuPathDB" id="HostDB:ENSG00000158163"/>
<dbReference type="eggNOG" id="ENOG502QRAI">
    <property type="taxonomic scope" value="Eukaryota"/>
</dbReference>
<dbReference type="GeneTree" id="ENSGT00940000160898"/>
<dbReference type="HOGENOM" id="CLU_018051_0_1_1"/>
<dbReference type="InParanoid" id="Q8IYY4"/>
<dbReference type="OMA" id="LMPHGFD"/>
<dbReference type="OrthoDB" id="515971at2759"/>
<dbReference type="PAN-GO" id="Q8IYY4">
    <property type="GO annotations" value="3 GO annotations based on evolutionary models"/>
</dbReference>
<dbReference type="PhylomeDB" id="Q8IYY4"/>
<dbReference type="TreeFam" id="TF330044"/>
<dbReference type="PathwayCommons" id="Q8IYY4"/>
<dbReference type="SignaLink" id="Q8IYY4"/>
<dbReference type="BioGRID-ORCS" id="199221">
    <property type="hits" value="15 hits in 1148 CRISPR screens"/>
</dbReference>
<dbReference type="ChiTaRS" id="DZIP1L">
    <property type="organism name" value="human"/>
</dbReference>
<dbReference type="GenomeRNAi" id="199221"/>
<dbReference type="Pharos" id="Q8IYY4">
    <property type="development level" value="Tdark"/>
</dbReference>
<dbReference type="PRO" id="PR:Q8IYY4"/>
<dbReference type="Proteomes" id="UP000005640">
    <property type="component" value="Chromosome 3"/>
</dbReference>
<dbReference type="RNAct" id="Q8IYY4">
    <property type="molecule type" value="protein"/>
</dbReference>
<dbReference type="Bgee" id="ENSG00000158163">
    <property type="expression patterns" value="Expressed in right uterine tube and 154 other cell types or tissues"/>
</dbReference>
<dbReference type="ExpressionAtlas" id="Q8IYY4">
    <property type="expression patterns" value="baseline and differential"/>
</dbReference>
<dbReference type="GO" id="GO:0005930">
    <property type="term" value="C:axoneme"/>
    <property type="evidence" value="ECO:0007669"/>
    <property type="project" value="Ensembl"/>
</dbReference>
<dbReference type="GO" id="GO:0005814">
    <property type="term" value="C:centriole"/>
    <property type="evidence" value="ECO:0000314"/>
    <property type="project" value="UniProtKB"/>
</dbReference>
<dbReference type="GO" id="GO:0036064">
    <property type="term" value="C:ciliary basal body"/>
    <property type="evidence" value="ECO:0000314"/>
    <property type="project" value="HPA"/>
</dbReference>
<dbReference type="GO" id="GO:0005929">
    <property type="term" value="C:cilium"/>
    <property type="evidence" value="ECO:0000314"/>
    <property type="project" value="HPA"/>
</dbReference>
<dbReference type="GO" id="GO:0005737">
    <property type="term" value="C:cytoplasm"/>
    <property type="evidence" value="ECO:0000318"/>
    <property type="project" value="GO_Central"/>
</dbReference>
<dbReference type="GO" id="GO:0005829">
    <property type="term" value="C:cytosol"/>
    <property type="evidence" value="ECO:0000314"/>
    <property type="project" value="HPA"/>
</dbReference>
<dbReference type="GO" id="GO:0045171">
    <property type="term" value="C:intercellular bridge"/>
    <property type="evidence" value="ECO:0000314"/>
    <property type="project" value="HPA"/>
</dbReference>
<dbReference type="GO" id="GO:0015630">
    <property type="term" value="C:microtubule cytoskeleton"/>
    <property type="evidence" value="ECO:0000314"/>
    <property type="project" value="HPA"/>
</dbReference>
<dbReference type="GO" id="GO:0072686">
    <property type="term" value="C:mitotic spindle"/>
    <property type="evidence" value="ECO:0000314"/>
    <property type="project" value="HPA"/>
</dbReference>
<dbReference type="GO" id="GO:0005654">
    <property type="term" value="C:nucleoplasm"/>
    <property type="evidence" value="ECO:0000314"/>
    <property type="project" value="HPA"/>
</dbReference>
<dbReference type="GO" id="GO:0008270">
    <property type="term" value="F:zinc ion binding"/>
    <property type="evidence" value="ECO:0007669"/>
    <property type="project" value="UniProtKB-KW"/>
</dbReference>
<dbReference type="GO" id="GO:1905349">
    <property type="term" value="P:ciliary transition zone assembly"/>
    <property type="evidence" value="ECO:0007669"/>
    <property type="project" value="Ensembl"/>
</dbReference>
<dbReference type="GO" id="GO:0060271">
    <property type="term" value="P:cilium assembly"/>
    <property type="evidence" value="ECO:0000315"/>
    <property type="project" value="UniProtKB"/>
</dbReference>
<dbReference type="GO" id="GO:0033504">
    <property type="term" value="P:floor plate development"/>
    <property type="evidence" value="ECO:0007669"/>
    <property type="project" value="Ensembl"/>
</dbReference>
<dbReference type="GO" id="GO:0021532">
    <property type="term" value="P:neural tube patterning"/>
    <property type="evidence" value="ECO:0007669"/>
    <property type="project" value="Ensembl"/>
</dbReference>
<dbReference type="GO" id="GO:0061512">
    <property type="term" value="P:protein localization to cilium"/>
    <property type="evidence" value="ECO:0007669"/>
    <property type="project" value="Ensembl"/>
</dbReference>
<dbReference type="GO" id="GO:0032880">
    <property type="term" value="P:regulation of protein localization"/>
    <property type="evidence" value="ECO:0000315"/>
    <property type="project" value="UniProtKB"/>
</dbReference>
<dbReference type="GO" id="GO:0007224">
    <property type="term" value="P:smoothened signaling pathway"/>
    <property type="evidence" value="ECO:0007669"/>
    <property type="project" value="Ensembl"/>
</dbReference>
<dbReference type="InterPro" id="IPR032714">
    <property type="entry name" value="DZIP1_N"/>
</dbReference>
<dbReference type="InterPro" id="IPR051241">
    <property type="entry name" value="DZIP_RILPL"/>
</dbReference>
<dbReference type="InterPro" id="IPR013087">
    <property type="entry name" value="Znf_C2H2_type"/>
</dbReference>
<dbReference type="PANTHER" id="PTHR21502:SF8">
    <property type="entry name" value="CILIUM ASSEMBLY PROTEIN DZIP1L"/>
    <property type="match status" value="1"/>
</dbReference>
<dbReference type="PANTHER" id="PTHR21502">
    <property type="entry name" value="ZINC FINGER PROTEIN DZIP1"/>
    <property type="match status" value="1"/>
</dbReference>
<dbReference type="Pfam" id="PF13815">
    <property type="entry name" value="Dzip-like_N"/>
    <property type="match status" value="1"/>
</dbReference>
<dbReference type="PROSITE" id="PS00028">
    <property type="entry name" value="ZINC_FINGER_C2H2_1"/>
    <property type="match status" value="1"/>
</dbReference>
<dbReference type="PROSITE" id="PS50157">
    <property type="entry name" value="ZINC_FINGER_C2H2_2"/>
    <property type="match status" value="1"/>
</dbReference>
<name>DZI1L_HUMAN</name>
<organism>
    <name type="scientific">Homo sapiens</name>
    <name type="common">Human</name>
    <dbReference type="NCBI Taxonomy" id="9606"/>
    <lineage>
        <taxon>Eukaryota</taxon>
        <taxon>Metazoa</taxon>
        <taxon>Chordata</taxon>
        <taxon>Craniata</taxon>
        <taxon>Vertebrata</taxon>
        <taxon>Euteleostomi</taxon>
        <taxon>Mammalia</taxon>
        <taxon>Eutheria</taxon>
        <taxon>Euarchontoglires</taxon>
        <taxon>Primates</taxon>
        <taxon>Haplorrhini</taxon>
        <taxon>Catarrhini</taxon>
        <taxon>Hominidae</taxon>
        <taxon>Homo</taxon>
    </lineage>
</organism>
<gene>
    <name evidence="12" type="primary">DZIP1L</name>
</gene>
<comment type="function">
    <text evidence="7 8">Involved in primary cilium formation (PubMed:19852954, PubMed:28530676). Probably acts as a transition zone protein required for localization of PKD1/PC1 and PKD2/PC2 to the ciliary membrane (PubMed:28530676).</text>
</comment>
<comment type="subunit">
    <text evidence="8">Interacts with SEPTIN2 (PubMed:28530676).</text>
</comment>
<comment type="interaction">
    <interactant intactId="EBI-10264440">
        <id>Q8IYY4</id>
    </interactant>
    <interactant intactId="EBI-746752">
        <id>Q9Y2J4</id>
        <label>AMOTL2</label>
    </interactant>
    <organismsDiffer>false</organismsDiffer>
    <experiments>3</experiments>
</comment>
<comment type="interaction">
    <interactant intactId="EBI-10264440">
        <id>Q8IYY4</id>
    </interactant>
    <interactant intactId="EBI-947308">
        <id>Q9Y3M2</id>
        <label>CBY1</label>
    </interactant>
    <organismsDiffer>false</organismsDiffer>
    <experiments>4</experiments>
</comment>
<comment type="interaction">
    <interactant intactId="EBI-10264440">
        <id>Q8IYY4</id>
    </interactant>
    <interactant intactId="EBI-741724">
        <id>Q8NA61</id>
        <label>CBY2</label>
    </interactant>
    <organismsDiffer>false</organismsDiffer>
    <experiments>3</experiments>
</comment>
<comment type="interaction">
    <interactant intactId="EBI-10264440">
        <id>Q8IYY4</id>
    </interactant>
    <interactant intactId="EBI-11524851">
        <id>Q8NA61-2</id>
        <label>CBY2</label>
    </interactant>
    <organismsDiffer>false</organismsDiffer>
    <experiments>5</experiments>
</comment>
<comment type="interaction">
    <interactant intactId="EBI-10264440">
        <id>Q8IYY4</id>
    </interactant>
    <interactant intactId="EBI-742887">
        <id>Q8TAP6</id>
        <label>CEP76</label>
    </interactant>
    <organismsDiffer>false</organismsDiffer>
    <experiments>5</experiments>
</comment>
<comment type="interaction">
    <interactant intactId="EBI-10264440">
        <id>Q8IYY4</id>
    </interactant>
    <interactant intactId="EBI-745046">
        <id>Q8WUT4</id>
        <label>LRRN4</label>
    </interactant>
    <organismsDiffer>false</organismsDiffer>
    <experiments>3</experiments>
</comment>
<comment type="interaction">
    <interactant intactId="EBI-10264440">
        <id>Q8IYY4</id>
    </interactant>
    <interactant intactId="EBI-10171633">
        <id>Q96PV4</id>
        <label>PNMA5</label>
    </interactant>
    <organismsDiffer>false</organismsDiffer>
    <experiments>3</experiments>
</comment>
<comment type="interaction">
    <interactant intactId="EBI-10264440">
        <id>Q8IYY4</id>
    </interactant>
    <interactant intactId="EBI-5280197">
        <id>O75400-2</id>
        <label>PRPF40A</label>
    </interactant>
    <organismsDiffer>false</organismsDiffer>
    <experiments>3</experiments>
</comment>
<comment type="interaction">
    <interactant intactId="EBI-10264440">
        <id>Q8IYY4</id>
    </interactant>
    <interactant intactId="EBI-11139477">
        <id>Q96N21</id>
        <label>TEPSIN</label>
    </interactant>
    <organismsDiffer>false</organismsDiffer>
    <experiments>3</experiments>
</comment>
<comment type="interaction">
    <interactant intactId="EBI-10264440">
        <id>Q8IYY4</id>
    </interactant>
    <interactant intactId="EBI-741602">
        <id>O94972</id>
        <label>TRIM37</label>
    </interactant>
    <organismsDiffer>false</organismsDiffer>
    <experiments>3</experiments>
</comment>
<comment type="subcellular location">
    <subcellularLocation>
        <location evidence="7 8">Cytoplasm</location>
        <location evidence="7 8">Cytoskeleton</location>
        <location evidence="7 8">Cilium basal body</location>
    </subcellularLocation>
    <subcellularLocation>
        <location evidence="8">Cytoplasm</location>
        <location evidence="8">Cytoskeleton</location>
        <location evidence="8">Microtubule organizing center</location>
        <location evidence="8">Centrosome</location>
        <location evidence="8">Centriole</location>
    </subcellularLocation>
    <text evidence="8">Localizes to centrioles and to the distal ends of basal bodies (PubMed:28530676).</text>
</comment>
<comment type="alternative products">
    <event type="alternative splicing"/>
    <isoform>
        <id>Q8IYY4-1</id>
        <name>1</name>
        <sequence type="displayed"/>
    </isoform>
    <isoform>
        <id>Q8IYY4-2</id>
        <name>2</name>
        <sequence type="described" ref="VSP_033158 VSP_033159"/>
    </isoform>
</comment>
<comment type="disease" evidence="8">
    <disease id="DI-05069">
        <name>Polycystic kidney disease 5</name>
        <acronym>PKD5</acronym>
        <description>A form of polycystic kidney disease, a disorder characterized by progressive formation and enlargement of cysts in both kidneys, typically leading to end-stage renal disease in adult life. Cysts may also occur in other organs, particularly the liver. PKD5 inheritance is autosomal recessive.</description>
        <dbReference type="MIM" id="617610"/>
    </disease>
    <text>The disease is caused by variants affecting the gene represented in this entry.</text>
</comment>
<comment type="similarity">
    <text evidence="10">Belongs to the DZIP C2H2-type zinc-finger protein family.</text>
</comment>
<protein>
    <recommendedName>
        <fullName evidence="11">Cilium assembly protein DZIP1L</fullName>
    </recommendedName>
    <alternativeName>
        <fullName evidence="12">DAZ-interacting zinc finger protein 1-like</fullName>
    </alternativeName>
</protein>
<proteinExistence type="evidence at protein level"/>
<feature type="chain" id="PRO_0000331306" description="Cilium assembly protein DZIP1L">
    <location>
        <begin position="1"/>
        <end position="767"/>
    </location>
</feature>
<feature type="zinc finger region" description="C2H2-type" evidence="3">
    <location>
        <begin position="166"/>
        <end position="189"/>
    </location>
</feature>
<feature type="region of interest" description="Disordered" evidence="4">
    <location>
        <begin position="122"/>
        <end position="144"/>
    </location>
</feature>
<feature type="region of interest" description="Disordered" evidence="4">
    <location>
        <begin position="518"/>
        <end position="767"/>
    </location>
</feature>
<feature type="coiled-coil region" evidence="2">
    <location>
        <begin position="205"/>
        <end position="406"/>
    </location>
</feature>
<feature type="compositionally biased region" description="Basic and acidic residues" evidence="4">
    <location>
        <begin position="131"/>
        <end position="144"/>
    </location>
</feature>
<feature type="compositionally biased region" description="Polar residues" evidence="4">
    <location>
        <begin position="533"/>
        <end position="547"/>
    </location>
</feature>
<feature type="compositionally biased region" description="Polar residues" evidence="4">
    <location>
        <begin position="574"/>
        <end position="588"/>
    </location>
</feature>
<feature type="compositionally biased region" description="Low complexity" evidence="4">
    <location>
        <begin position="607"/>
        <end position="616"/>
    </location>
</feature>
<feature type="compositionally biased region" description="Polar residues" evidence="4">
    <location>
        <begin position="658"/>
        <end position="675"/>
    </location>
</feature>
<feature type="compositionally biased region" description="Basic and acidic residues" evidence="4">
    <location>
        <begin position="677"/>
        <end position="686"/>
    </location>
</feature>
<feature type="modified residue" description="Phosphoserine" evidence="1">
    <location>
        <position position="426"/>
    </location>
</feature>
<feature type="splice variant" id="VSP_033158" description="In isoform 2." evidence="9">
    <original>V</original>
    <variation>G</variation>
    <location>
        <position position="539"/>
    </location>
</feature>
<feature type="splice variant" id="VSP_033159" description="In isoform 2." evidence="9">
    <location>
        <begin position="540"/>
        <end position="767"/>
    </location>
</feature>
<feature type="sequence variant" id="VAR_078962" description="In PKD5; dbSNP:rs555349004." evidence="8">
    <original>A</original>
    <variation>V</variation>
    <location>
        <position position="90"/>
    </location>
</feature>
<feature type="sequence variant" id="VAR_078963" description="In PKD5; dbSNP:rs1135402754." evidence="8">
    <original>Q</original>
    <variation>H</variation>
    <location>
        <position position="91"/>
    </location>
</feature>
<feature type="sequence variant" id="VAR_078964" description="In PKD5." evidence="8">
    <location>
        <begin position="155"/>
        <end position="767"/>
    </location>
</feature>
<feature type="sequence variant" id="VAR_042756" description="In dbSNP:rs2724693." evidence="5">
    <original>R</original>
    <variation>W</variation>
    <location>
        <position position="321"/>
    </location>
</feature>
<feature type="sequence variant" id="VAR_042757" description="In dbSNP:rs446644." evidence="6">
    <original>T</original>
    <variation>A</variation>
    <location>
        <position position="545"/>
    </location>
</feature>
<feature type="sequence variant" id="VAR_042758" description="In dbSNP:rs11917468.">
    <original>A</original>
    <variation>V</variation>
    <location>
        <position position="551"/>
    </location>
</feature>
<feature type="sequence variant" id="VAR_042759" description="In dbSNP:rs374045." evidence="6">
    <original>R</original>
    <variation>H</variation>
    <location>
        <position position="593"/>
    </location>
</feature>
<feature type="sequence variant" id="VAR_042760" description="In dbSNP:rs442800.">
    <original>K</original>
    <variation>E</variation>
    <location>
        <position position="645"/>
    </location>
</feature>
<feature type="sequence conflict" description="In Ref. 1; BAB71474." evidence="10" ref="1">
    <original>M</original>
    <variation>T</variation>
    <location>
        <position position="158"/>
    </location>
</feature>
<feature type="sequence conflict" description="In Ref. 1; BAB71474." evidence="10" ref="1">
    <original>S</original>
    <variation>N</variation>
    <location>
        <position position="382"/>
    </location>
</feature>
<feature type="sequence conflict" description="In Ref. 3; AAH33308." evidence="10" ref="3">
    <original>V</original>
    <variation>A</variation>
    <location>
        <position position="529"/>
    </location>
</feature>
<reference key="1">
    <citation type="journal article" date="2004" name="Nat. Genet.">
        <title>Complete sequencing and characterization of 21,243 full-length human cDNAs.</title>
        <authorList>
            <person name="Ota T."/>
            <person name="Suzuki Y."/>
            <person name="Nishikawa T."/>
            <person name="Otsuki T."/>
            <person name="Sugiyama T."/>
            <person name="Irie R."/>
            <person name="Wakamatsu A."/>
            <person name="Hayashi K."/>
            <person name="Sato H."/>
            <person name="Nagai K."/>
            <person name="Kimura K."/>
            <person name="Makita H."/>
            <person name="Sekine M."/>
            <person name="Obayashi M."/>
            <person name="Nishi T."/>
            <person name="Shibahara T."/>
            <person name="Tanaka T."/>
            <person name="Ishii S."/>
            <person name="Yamamoto J."/>
            <person name="Saito K."/>
            <person name="Kawai Y."/>
            <person name="Isono Y."/>
            <person name="Nakamura Y."/>
            <person name="Nagahari K."/>
            <person name="Murakami K."/>
            <person name="Yasuda T."/>
            <person name="Iwayanagi T."/>
            <person name="Wagatsuma M."/>
            <person name="Shiratori A."/>
            <person name="Sudo H."/>
            <person name="Hosoiri T."/>
            <person name="Kaku Y."/>
            <person name="Kodaira H."/>
            <person name="Kondo H."/>
            <person name="Sugawara M."/>
            <person name="Takahashi M."/>
            <person name="Kanda K."/>
            <person name="Yokoi T."/>
            <person name="Furuya T."/>
            <person name="Kikkawa E."/>
            <person name="Omura Y."/>
            <person name="Abe K."/>
            <person name="Kamihara K."/>
            <person name="Katsuta N."/>
            <person name="Sato K."/>
            <person name="Tanikawa M."/>
            <person name="Yamazaki M."/>
            <person name="Ninomiya K."/>
            <person name="Ishibashi T."/>
            <person name="Yamashita H."/>
            <person name="Murakawa K."/>
            <person name="Fujimori K."/>
            <person name="Tanai H."/>
            <person name="Kimata M."/>
            <person name="Watanabe M."/>
            <person name="Hiraoka S."/>
            <person name="Chiba Y."/>
            <person name="Ishida S."/>
            <person name="Ono Y."/>
            <person name="Takiguchi S."/>
            <person name="Watanabe S."/>
            <person name="Yosida M."/>
            <person name="Hotuta T."/>
            <person name="Kusano J."/>
            <person name="Kanehori K."/>
            <person name="Takahashi-Fujii A."/>
            <person name="Hara H."/>
            <person name="Tanase T.-O."/>
            <person name="Nomura Y."/>
            <person name="Togiya S."/>
            <person name="Komai F."/>
            <person name="Hara R."/>
            <person name="Takeuchi K."/>
            <person name="Arita M."/>
            <person name="Imose N."/>
            <person name="Musashino K."/>
            <person name="Yuuki H."/>
            <person name="Oshima A."/>
            <person name="Sasaki N."/>
            <person name="Aotsuka S."/>
            <person name="Yoshikawa Y."/>
            <person name="Matsunawa H."/>
            <person name="Ichihara T."/>
            <person name="Shiohata N."/>
            <person name="Sano S."/>
            <person name="Moriya S."/>
            <person name="Momiyama H."/>
            <person name="Satoh N."/>
            <person name="Takami S."/>
            <person name="Terashima Y."/>
            <person name="Suzuki O."/>
            <person name="Nakagawa S."/>
            <person name="Senoh A."/>
            <person name="Mizoguchi H."/>
            <person name="Goto Y."/>
            <person name="Shimizu F."/>
            <person name="Wakebe H."/>
            <person name="Hishigaki H."/>
            <person name="Watanabe T."/>
            <person name="Sugiyama A."/>
            <person name="Takemoto M."/>
            <person name="Kawakami B."/>
            <person name="Yamazaki M."/>
            <person name="Watanabe K."/>
            <person name="Kumagai A."/>
            <person name="Itakura S."/>
            <person name="Fukuzumi Y."/>
            <person name="Fujimori Y."/>
            <person name="Komiyama M."/>
            <person name="Tashiro H."/>
            <person name="Tanigami A."/>
            <person name="Fujiwara T."/>
            <person name="Ono T."/>
            <person name="Yamada K."/>
            <person name="Fujii Y."/>
            <person name="Ozaki K."/>
            <person name="Hirao M."/>
            <person name="Ohmori Y."/>
            <person name="Kawabata A."/>
            <person name="Hikiji T."/>
            <person name="Kobatake N."/>
            <person name="Inagaki H."/>
            <person name="Ikema Y."/>
            <person name="Okamoto S."/>
            <person name="Okitani R."/>
            <person name="Kawakami T."/>
            <person name="Noguchi S."/>
            <person name="Itoh T."/>
            <person name="Shigeta K."/>
            <person name="Senba T."/>
            <person name="Matsumura K."/>
            <person name="Nakajima Y."/>
            <person name="Mizuno T."/>
            <person name="Morinaga M."/>
            <person name="Sasaki M."/>
            <person name="Togashi T."/>
            <person name="Oyama M."/>
            <person name="Hata H."/>
            <person name="Watanabe M."/>
            <person name="Komatsu T."/>
            <person name="Mizushima-Sugano J."/>
            <person name="Satoh T."/>
            <person name="Shirai Y."/>
            <person name="Takahashi Y."/>
            <person name="Nakagawa K."/>
            <person name="Okumura K."/>
            <person name="Nagase T."/>
            <person name="Nomura N."/>
            <person name="Kikuchi H."/>
            <person name="Masuho Y."/>
            <person name="Yamashita R."/>
            <person name="Nakai K."/>
            <person name="Yada T."/>
            <person name="Nakamura Y."/>
            <person name="Ohara O."/>
            <person name="Isogai T."/>
            <person name="Sugano S."/>
        </authorList>
    </citation>
    <scope>NUCLEOTIDE SEQUENCE [LARGE SCALE MRNA] (ISOFORM 2)</scope>
    <scope>VARIANT TRP-321</scope>
    <source>
        <tissue>Testis</tissue>
    </source>
</reference>
<reference key="2">
    <citation type="journal article" date="2006" name="Nature">
        <title>The DNA sequence, annotation and analysis of human chromosome 3.</title>
        <authorList>
            <person name="Muzny D.M."/>
            <person name="Scherer S.E."/>
            <person name="Kaul R."/>
            <person name="Wang J."/>
            <person name="Yu J."/>
            <person name="Sudbrak R."/>
            <person name="Buhay C.J."/>
            <person name="Chen R."/>
            <person name="Cree A."/>
            <person name="Ding Y."/>
            <person name="Dugan-Rocha S."/>
            <person name="Gill R."/>
            <person name="Gunaratne P."/>
            <person name="Harris R.A."/>
            <person name="Hawes A.C."/>
            <person name="Hernandez J."/>
            <person name="Hodgson A.V."/>
            <person name="Hume J."/>
            <person name="Jackson A."/>
            <person name="Khan Z.M."/>
            <person name="Kovar-Smith C."/>
            <person name="Lewis L.R."/>
            <person name="Lozado R.J."/>
            <person name="Metzker M.L."/>
            <person name="Milosavljevic A."/>
            <person name="Miner G.R."/>
            <person name="Morgan M.B."/>
            <person name="Nazareth L.V."/>
            <person name="Scott G."/>
            <person name="Sodergren E."/>
            <person name="Song X.-Z."/>
            <person name="Steffen D."/>
            <person name="Wei S."/>
            <person name="Wheeler D.A."/>
            <person name="Wright M.W."/>
            <person name="Worley K.C."/>
            <person name="Yuan Y."/>
            <person name="Zhang Z."/>
            <person name="Adams C.Q."/>
            <person name="Ansari-Lari M.A."/>
            <person name="Ayele M."/>
            <person name="Brown M.J."/>
            <person name="Chen G."/>
            <person name="Chen Z."/>
            <person name="Clendenning J."/>
            <person name="Clerc-Blankenburg K.P."/>
            <person name="Chen R."/>
            <person name="Chen Z."/>
            <person name="Davis C."/>
            <person name="Delgado O."/>
            <person name="Dinh H.H."/>
            <person name="Dong W."/>
            <person name="Draper H."/>
            <person name="Ernst S."/>
            <person name="Fu G."/>
            <person name="Gonzalez-Garay M.L."/>
            <person name="Garcia D.K."/>
            <person name="Gillett W."/>
            <person name="Gu J."/>
            <person name="Hao B."/>
            <person name="Haugen E."/>
            <person name="Havlak P."/>
            <person name="He X."/>
            <person name="Hennig S."/>
            <person name="Hu S."/>
            <person name="Huang W."/>
            <person name="Jackson L.R."/>
            <person name="Jacob L.S."/>
            <person name="Kelly S.H."/>
            <person name="Kube M."/>
            <person name="Levy R."/>
            <person name="Li Z."/>
            <person name="Liu B."/>
            <person name="Liu J."/>
            <person name="Liu W."/>
            <person name="Lu J."/>
            <person name="Maheshwari M."/>
            <person name="Nguyen B.-V."/>
            <person name="Okwuonu G.O."/>
            <person name="Palmeiri A."/>
            <person name="Pasternak S."/>
            <person name="Perez L.M."/>
            <person name="Phelps K.A."/>
            <person name="Plopper F.J."/>
            <person name="Qiang B."/>
            <person name="Raymond C."/>
            <person name="Rodriguez R."/>
            <person name="Saenphimmachak C."/>
            <person name="Santibanez J."/>
            <person name="Shen H."/>
            <person name="Shen Y."/>
            <person name="Subramanian S."/>
            <person name="Tabor P.E."/>
            <person name="Verduzco D."/>
            <person name="Waldron L."/>
            <person name="Wang J."/>
            <person name="Wang J."/>
            <person name="Wang Q."/>
            <person name="Williams G.A."/>
            <person name="Wong G.K.-S."/>
            <person name="Yao Z."/>
            <person name="Zhang J."/>
            <person name="Zhang X."/>
            <person name="Zhao G."/>
            <person name="Zhou J."/>
            <person name="Zhou Y."/>
            <person name="Nelson D."/>
            <person name="Lehrach H."/>
            <person name="Reinhardt R."/>
            <person name="Naylor S.L."/>
            <person name="Yang H."/>
            <person name="Olson M."/>
            <person name="Weinstock G."/>
            <person name="Gibbs R.A."/>
        </authorList>
    </citation>
    <scope>NUCLEOTIDE SEQUENCE [LARGE SCALE GENOMIC DNA]</scope>
</reference>
<reference key="3">
    <citation type="journal article" date="2004" name="Genome Res.">
        <title>The status, quality, and expansion of the NIH full-length cDNA project: the Mammalian Gene Collection (MGC).</title>
        <authorList>
            <consortium name="The MGC Project Team"/>
        </authorList>
    </citation>
    <scope>NUCLEOTIDE SEQUENCE [LARGE SCALE MRNA] (ISOFORM 1)</scope>
    <scope>VARIANTS ALA-545 AND HIS-593</scope>
    <source>
        <tissue>Brain</tissue>
    </source>
</reference>
<reference key="4">
    <citation type="journal article" date="2010" name="Dev. Biol.">
        <title>The Zn finger protein Iguana impacts Hedgehog signaling by promoting ciliogenesis.</title>
        <authorList>
            <person name="Glazer A.M."/>
            <person name="Wilkinson A.W."/>
            <person name="Backer C.B."/>
            <person name="Lapan S.W."/>
            <person name="Gutzman J.H."/>
            <person name="Cheeseman I.M."/>
            <person name="Reddien P.W."/>
        </authorList>
    </citation>
    <scope>FUNCTION</scope>
    <scope>SUBCELLULAR LOCATION</scope>
</reference>
<reference key="5">
    <citation type="journal article" date="2017" name="Nat. Genet.">
        <title>Mutations in DZIP1L, which encodes a ciliary-transition-zone protein, cause autosomal recessive polycystic kidney disease.</title>
        <authorList>
            <person name="Lu H."/>
            <person name="Galeano M.C.R."/>
            <person name="Ott E."/>
            <person name="Kaeslin G."/>
            <person name="Kausalya P.J."/>
            <person name="Kramer C."/>
            <person name="Ortiz-Bruechle N."/>
            <person name="Hilger N."/>
            <person name="Metzis V."/>
            <person name="Hiersche M."/>
            <person name="Tay S.Y."/>
            <person name="Tunningley R."/>
            <person name="Vij S."/>
            <person name="Courtney A.D."/>
            <person name="Whittle B."/>
            <person name="Wuehl E."/>
            <person name="Vester U."/>
            <person name="Hartleben B."/>
            <person name="Neuber S."/>
            <person name="Frank V."/>
            <person name="Little M.H."/>
            <person name="Epting D."/>
            <person name="Papathanasiou P."/>
            <person name="Perkins A.C."/>
            <person name="Wright G.D."/>
            <person name="Hunziker W."/>
            <person name="Gee H.Y."/>
            <person name="Otto E.A."/>
            <person name="Zerres K."/>
            <person name="Hildebrandt F."/>
            <person name="Roy S."/>
            <person name="Wicking C."/>
            <person name="Bergmann C."/>
        </authorList>
    </citation>
    <scope>FUNCTION</scope>
    <scope>SUBCELLULAR LOCATION</scope>
    <scope>INTERACTION WITH SEPTIN2</scope>
    <scope>INVOLVEMENT IN PKD5</scope>
    <scope>VARIANTS PKD5 VAL-90; HIS-91 AND 155-GLN--TRP-767 DEL</scope>
</reference>
<evidence type="ECO:0000250" key="1">
    <source>
        <dbReference type="UniProtKB" id="Q499E4"/>
    </source>
</evidence>
<evidence type="ECO:0000255" key="2"/>
<evidence type="ECO:0000255" key="3">
    <source>
        <dbReference type="PROSITE-ProRule" id="PRU00042"/>
    </source>
</evidence>
<evidence type="ECO:0000256" key="4">
    <source>
        <dbReference type="SAM" id="MobiDB-lite"/>
    </source>
</evidence>
<evidence type="ECO:0000269" key="5">
    <source>
    </source>
</evidence>
<evidence type="ECO:0000269" key="6">
    <source>
    </source>
</evidence>
<evidence type="ECO:0000269" key="7">
    <source>
    </source>
</evidence>
<evidence type="ECO:0000269" key="8">
    <source>
    </source>
</evidence>
<evidence type="ECO:0000303" key="9">
    <source>
    </source>
</evidence>
<evidence type="ECO:0000305" key="10"/>
<evidence type="ECO:0000305" key="11">
    <source>
    </source>
</evidence>
<evidence type="ECO:0000312" key="12">
    <source>
        <dbReference type="HGNC" id="HGNC:26551"/>
    </source>
</evidence>
<accession>Q8IYY4</accession>
<accession>C9JUG5</accession>
<accession>Q96M38</accession>
<sequence length="767" mass="86848">MQSPAATAEGLSGPLFGAYTFPTFKFQPRHDSMDWRRISTLDVDRVARELDVATLQENIAGITFCNLDREVCSRCGQPVDPALLKVLRLAQLIIEYLLHCQDCLSASVAQLEARLQTSLGQQQRGQQELGRQADELKGVREESRRRRKMISTLQQLLMQTGTHSYHTCHLCDKTFMNATFLRGHIQRRHAGVAEGGKQKKQEQPVEEVLEELRAKLKWTQGELEAQREAERQRQLQEAELIHQREIEAKKEFDKWKEQEWTKLYGEIDKLKKLFWDEFKNVAKQNSTLEEKLRALQSHSVMESKLGSLRDEESEEWLRQARELQALREKTEIQKTEWKRKVKELHEEHMAEKKELQEENQRLQASLSQDQKKAAAQSQCQISTLRAQLQEQARIIASQEEMIQSLSLRKVEGIHKVPKAVDTEEDSPEEEMEDSQDEQHKVLAALRRNPTLLKHFRPILEDTLEEKLESMGIRKDAKGISIQTLRHLESLLRVQREQKARKFSEFLSLRGKLVKEVTSRAKERQENGAVVSQPDGQPSVKSQQSTLVTREAQPKTRTLQVALPSTPAEPPPPTRQSHGSHGSSLTQVSAPAPRPGLHGPSSTPPSSGPGMSTPPFSSEEDSEGDRVQRVSLQPPKVPSRMVPRPKDDWDWSDTETSEENAQPPGQGSGTLVQSMVKNLEKQLEAPAKKPAGGVSLFFMPNAGPQRAATPGRKPQLSEDESDLEISSLEDLPLDLDQREKPKPLSRSKLPEKFGTGPQSSGQPRVPAW</sequence>